<name>Y996_STRR6</name>
<protein>
    <recommendedName>
        <fullName>UPF0758 protein spr0996</fullName>
    </recommendedName>
</protein>
<comment type="disruption phenotype">
    <text evidence="2">Mutants show normal uptake and processing of transforming DNA. They also display normal sensitivity to DNA-damaging agents.</text>
</comment>
<comment type="similarity">
    <text evidence="3">Belongs to the UPF0758 family.</text>
</comment>
<comment type="caution">
    <text evidence="4">Was originally thought to be the site of the radC102 mutation, but it was subsequently shown that it is not the case.</text>
</comment>
<comment type="sequence caution" evidence="3">
    <conflict type="erroneous initiation">
        <sequence resource="EMBL-CDS" id="AAK99800"/>
    </conflict>
</comment>
<organism>
    <name type="scientific">Streptococcus pneumoniae (strain ATCC BAA-255 / R6)</name>
    <dbReference type="NCBI Taxonomy" id="171101"/>
    <lineage>
        <taxon>Bacteria</taxon>
        <taxon>Bacillati</taxon>
        <taxon>Bacillota</taxon>
        <taxon>Bacilli</taxon>
        <taxon>Lactobacillales</taxon>
        <taxon>Streptococcaceae</taxon>
        <taxon>Streptococcus</taxon>
    </lineage>
</organism>
<accession>Q8DPU7</accession>
<dbReference type="EMBL" id="AE007317">
    <property type="protein sequence ID" value="AAK99800.1"/>
    <property type="status" value="ALT_INIT"/>
    <property type="molecule type" value="Genomic_DNA"/>
</dbReference>
<dbReference type="PIR" id="D97996">
    <property type="entry name" value="D97996"/>
</dbReference>
<dbReference type="RefSeq" id="NP_358590.1">
    <property type="nucleotide sequence ID" value="NC_003098.1"/>
</dbReference>
<dbReference type="RefSeq" id="WP_000286923.1">
    <property type="nucleotide sequence ID" value="NC_003098.1"/>
</dbReference>
<dbReference type="SMR" id="Q8DPU7"/>
<dbReference type="STRING" id="171101.spr0996"/>
<dbReference type="KEGG" id="spr:spr0996"/>
<dbReference type="PATRIC" id="fig|171101.6.peg.1084"/>
<dbReference type="eggNOG" id="COG2003">
    <property type="taxonomic scope" value="Bacteria"/>
</dbReference>
<dbReference type="HOGENOM" id="CLU_073529_0_2_9"/>
<dbReference type="Proteomes" id="UP000000586">
    <property type="component" value="Chromosome"/>
</dbReference>
<dbReference type="GO" id="GO:0046872">
    <property type="term" value="F:metal ion binding"/>
    <property type="evidence" value="ECO:0007669"/>
    <property type="project" value="UniProtKB-KW"/>
</dbReference>
<dbReference type="GO" id="GO:0008237">
    <property type="term" value="F:metallopeptidase activity"/>
    <property type="evidence" value="ECO:0007669"/>
    <property type="project" value="UniProtKB-KW"/>
</dbReference>
<dbReference type="GO" id="GO:0006508">
    <property type="term" value="P:proteolysis"/>
    <property type="evidence" value="ECO:0007669"/>
    <property type="project" value="UniProtKB-KW"/>
</dbReference>
<dbReference type="CDD" id="cd08071">
    <property type="entry name" value="MPN_DUF2466"/>
    <property type="match status" value="1"/>
</dbReference>
<dbReference type="Gene3D" id="3.40.140.10">
    <property type="entry name" value="Cytidine Deaminase, domain 2"/>
    <property type="match status" value="1"/>
</dbReference>
<dbReference type="InterPro" id="IPR037518">
    <property type="entry name" value="MPN"/>
</dbReference>
<dbReference type="InterPro" id="IPR025657">
    <property type="entry name" value="RadC_JAB"/>
</dbReference>
<dbReference type="InterPro" id="IPR010994">
    <property type="entry name" value="RuvA_2-like"/>
</dbReference>
<dbReference type="InterPro" id="IPR001405">
    <property type="entry name" value="UPF0758"/>
</dbReference>
<dbReference type="InterPro" id="IPR020891">
    <property type="entry name" value="UPF0758_CS"/>
</dbReference>
<dbReference type="InterPro" id="IPR046778">
    <property type="entry name" value="UPF0758_N"/>
</dbReference>
<dbReference type="NCBIfam" id="NF000642">
    <property type="entry name" value="PRK00024.1"/>
    <property type="match status" value="1"/>
</dbReference>
<dbReference type="NCBIfam" id="TIGR00608">
    <property type="entry name" value="radc"/>
    <property type="match status" value="1"/>
</dbReference>
<dbReference type="PANTHER" id="PTHR30471">
    <property type="entry name" value="DNA REPAIR PROTEIN RADC"/>
    <property type="match status" value="1"/>
</dbReference>
<dbReference type="PANTHER" id="PTHR30471:SF3">
    <property type="entry name" value="UPF0758 PROTEIN YEES-RELATED"/>
    <property type="match status" value="1"/>
</dbReference>
<dbReference type="Pfam" id="PF04002">
    <property type="entry name" value="RadC"/>
    <property type="match status" value="1"/>
</dbReference>
<dbReference type="Pfam" id="PF20582">
    <property type="entry name" value="UPF0758_N"/>
    <property type="match status" value="1"/>
</dbReference>
<dbReference type="SUPFAM" id="SSF47781">
    <property type="entry name" value="RuvA domain 2-like"/>
    <property type="match status" value="1"/>
</dbReference>
<dbReference type="PROSITE" id="PS50249">
    <property type="entry name" value="MPN"/>
    <property type="match status" value="1"/>
</dbReference>
<dbReference type="PROSITE" id="PS01302">
    <property type="entry name" value="UPF0758"/>
    <property type="match status" value="1"/>
</dbReference>
<reference key="1">
    <citation type="journal article" date="2001" name="J. Bacteriol.">
        <title>Genome of the bacterium Streptococcus pneumoniae strain R6.</title>
        <authorList>
            <person name="Hoskins J."/>
            <person name="Alborn W.E. Jr."/>
            <person name="Arnold J."/>
            <person name="Blaszczak L.C."/>
            <person name="Burgett S."/>
            <person name="DeHoff B.S."/>
            <person name="Estrem S.T."/>
            <person name="Fritz L."/>
            <person name="Fu D.-J."/>
            <person name="Fuller W."/>
            <person name="Geringer C."/>
            <person name="Gilmour R."/>
            <person name="Glass J.S."/>
            <person name="Khoja H."/>
            <person name="Kraft A.R."/>
            <person name="Lagace R.E."/>
            <person name="LeBlanc D.J."/>
            <person name="Lee L.N."/>
            <person name="Lefkowitz E.J."/>
            <person name="Lu J."/>
            <person name="Matsushima P."/>
            <person name="McAhren S.M."/>
            <person name="McHenney M."/>
            <person name="McLeaster K."/>
            <person name="Mundy C.W."/>
            <person name="Nicas T.I."/>
            <person name="Norris F.H."/>
            <person name="O'Gara M."/>
            <person name="Peery R.B."/>
            <person name="Robertson G.T."/>
            <person name="Rockey P."/>
            <person name="Sun P.-M."/>
            <person name="Winkler M.E."/>
            <person name="Yang Y."/>
            <person name="Young-Bellido M."/>
            <person name="Zhao G."/>
            <person name="Zook C.A."/>
            <person name="Baltz R.H."/>
            <person name="Jaskunas S.R."/>
            <person name="Rosteck P.R. Jr."/>
            <person name="Skatrud P.L."/>
            <person name="Glass J.I."/>
        </authorList>
    </citation>
    <scope>NUCLEOTIDE SEQUENCE [LARGE SCALE GENOMIC DNA]</scope>
    <source>
        <strain>ATCC BAA-255 / R6</strain>
    </source>
</reference>
<reference key="2">
    <citation type="journal article" date="2008" name="J. Bacteriol.">
        <title>RadC, a misleading name?</title>
        <authorList>
            <person name="Attaiech L."/>
            <person name="Granadel C."/>
            <person name="Claverys J.P."/>
            <person name="Martin B."/>
        </authorList>
    </citation>
    <scope>DISRUPTION PHENOTYPE</scope>
    <scope>SHOWS THAT THIS IS NOT RADC</scope>
</reference>
<keyword id="KW-0378">Hydrolase</keyword>
<keyword id="KW-0479">Metal-binding</keyword>
<keyword id="KW-0482">Metalloprotease</keyword>
<keyword id="KW-0645">Protease</keyword>
<keyword id="KW-1185">Reference proteome</keyword>
<keyword id="KW-0862">Zinc</keyword>
<evidence type="ECO:0000255" key="1">
    <source>
        <dbReference type="PROSITE-ProRule" id="PRU01182"/>
    </source>
</evidence>
<evidence type="ECO:0000269" key="2">
    <source>
    </source>
</evidence>
<evidence type="ECO:0000305" key="3"/>
<evidence type="ECO:0000305" key="4">
    <source>
    </source>
</evidence>
<sequence>MYSISFQEDSLLPRERLAKEGVEALSNQELLAILLRTGTRQASVFEIAQKVLNNLSSLTDLKKMTLQELQSLSGIGRVKAIELQAMIELGHRIHKHETLEMESILSSQKLAKKMQQELGDKKQEHLVALYLNTQNQIIHQQTIFIGSVTRSIAEPREILHYAIKHMATSLVLVHNHPSGAVAPSQNDDHVTKLVKEACELMGIVLLDHLIVSHSNYFSYREKTDLI</sequence>
<proteinExistence type="inferred from homology"/>
<gene>
    <name type="ordered locus">spr0996</name>
</gene>
<feature type="chain" id="PRO_0000190738" description="UPF0758 protein spr0996">
    <location>
        <begin position="1"/>
        <end position="226"/>
    </location>
</feature>
<feature type="domain" description="MPN" evidence="1">
    <location>
        <begin position="103"/>
        <end position="225"/>
    </location>
</feature>
<feature type="short sequence motif" description="JAMM motif" evidence="1">
    <location>
        <begin position="174"/>
        <end position="187"/>
    </location>
</feature>
<feature type="binding site" evidence="1">
    <location>
        <position position="174"/>
    </location>
    <ligand>
        <name>Zn(2+)</name>
        <dbReference type="ChEBI" id="CHEBI:29105"/>
        <note>catalytic</note>
    </ligand>
</feature>
<feature type="binding site" evidence="1">
    <location>
        <position position="176"/>
    </location>
    <ligand>
        <name>Zn(2+)</name>
        <dbReference type="ChEBI" id="CHEBI:29105"/>
        <note>catalytic</note>
    </ligand>
</feature>
<feature type="binding site" evidence="1">
    <location>
        <position position="187"/>
    </location>
    <ligand>
        <name>Zn(2+)</name>
        <dbReference type="ChEBI" id="CHEBI:29105"/>
        <note>catalytic</note>
    </ligand>
</feature>